<gene>
    <name type="primary">TUBGCP6</name>
    <name type="synonym">GCP6</name>
    <name type="synonym">KIAA1669</name>
</gene>
<organism>
    <name type="scientific">Homo sapiens</name>
    <name type="common">Human</name>
    <dbReference type="NCBI Taxonomy" id="9606"/>
    <lineage>
        <taxon>Eukaryota</taxon>
        <taxon>Metazoa</taxon>
        <taxon>Chordata</taxon>
        <taxon>Craniata</taxon>
        <taxon>Vertebrata</taxon>
        <taxon>Euteleostomi</taxon>
        <taxon>Mammalia</taxon>
        <taxon>Eutheria</taxon>
        <taxon>Euarchontoglires</taxon>
        <taxon>Primates</taxon>
        <taxon>Haplorrhini</taxon>
        <taxon>Catarrhini</taxon>
        <taxon>Hominidae</taxon>
        <taxon>Homo</taxon>
    </lineage>
</organism>
<reference key="1">
    <citation type="journal article" date="2001" name="Mol. Biol. Cell">
        <title>GCP5 and GCP6: two new members of the human gamma-tubulin complex.</title>
        <authorList>
            <person name="Murphy S.M."/>
            <person name="Preble A.M."/>
            <person name="Patel U.K."/>
            <person name="O'Connell K.L."/>
            <person name="Dias D.P."/>
            <person name="Moritz M."/>
            <person name="Agard D."/>
            <person name="Stults J.T."/>
            <person name="Stearns T."/>
        </authorList>
    </citation>
    <scope>NUCLEOTIDE SEQUENCE [MRNA] (ISOFORM 1)</scope>
    <scope>FUNCTION</scope>
    <scope>SUBUNIT</scope>
    <scope>SUBCELLULAR LOCATION</scope>
    <scope>VARIANTS SER-567 AND ALA-1377</scope>
</reference>
<reference key="2">
    <citation type="journal article" date="1999" name="Nature">
        <title>The DNA sequence of human chromosome 22.</title>
        <authorList>
            <person name="Dunham I."/>
            <person name="Hunt A.R."/>
            <person name="Collins J.E."/>
            <person name="Bruskiewich R."/>
            <person name="Beare D.M."/>
            <person name="Clamp M."/>
            <person name="Smink L.J."/>
            <person name="Ainscough R."/>
            <person name="Almeida J.P."/>
            <person name="Babbage A.K."/>
            <person name="Bagguley C."/>
            <person name="Bailey J."/>
            <person name="Barlow K.F."/>
            <person name="Bates K.N."/>
            <person name="Beasley O.P."/>
            <person name="Bird C.P."/>
            <person name="Blakey S.E."/>
            <person name="Bridgeman A.M."/>
            <person name="Buck D."/>
            <person name="Burgess J."/>
            <person name="Burrill W.D."/>
            <person name="Burton J."/>
            <person name="Carder C."/>
            <person name="Carter N.P."/>
            <person name="Chen Y."/>
            <person name="Clark G."/>
            <person name="Clegg S.M."/>
            <person name="Cobley V.E."/>
            <person name="Cole C.G."/>
            <person name="Collier R.E."/>
            <person name="Connor R."/>
            <person name="Conroy D."/>
            <person name="Corby N.R."/>
            <person name="Coville G.J."/>
            <person name="Cox A.V."/>
            <person name="Davis J."/>
            <person name="Dawson E."/>
            <person name="Dhami P.D."/>
            <person name="Dockree C."/>
            <person name="Dodsworth S.J."/>
            <person name="Durbin R.M."/>
            <person name="Ellington A.G."/>
            <person name="Evans K.L."/>
            <person name="Fey J.M."/>
            <person name="Fleming K."/>
            <person name="French L."/>
            <person name="Garner A.A."/>
            <person name="Gilbert J.G.R."/>
            <person name="Goward M.E."/>
            <person name="Grafham D.V."/>
            <person name="Griffiths M.N.D."/>
            <person name="Hall C."/>
            <person name="Hall R.E."/>
            <person name="Hall-Tamlyn G."/>
            <person name="Heathcott R.W."/>
            <person name="Ho S."/>
            <person name="Holmes S."/>
            <person name="Hunt S.E."/>
            <person name="Jones M.C."/>
            <person name="Kershaw J."/>
            <person name="Kimberley A.M."/>
            <person name="King A."/>
            <person name="Laird G.K."/>
            <person name="Langford C.F."/>
            <person name="Leversha M.A."/>
            <person name="Lloyd C."/>
            <person name="Lloyd D.M."/>
            <person name="Martyn I.D."/>
            <person name="Mashreghi-Mohammadi M."/>
            <person name="Matthews L.H."/>
            <person name="Mccann O.T."/>
            <person name="Mcclay J."/>
            <person name="Mclaren S."/>
            <person name="McMurray A.A."/>
            <person name="Milne S.A."/>
            <person name="Mortimore B.J."/>
            <person name="Odell C.N."/>
            <person name="Pavitt R."/>
            <person name="Pearce A.V."/>
            <person name="Pearson D."/>
            <person name="Phillimore B.J.C.T."/>
            <person name="Phillips S.H."/>
            <person name="Plumb R.W."/>
            <person name="Ramsay H."/>
            <person name="Ramsey Y."/>
            <person name="Rogers L."/>
            <person name="Ross M.T."/>
            <person name="Scott C.E."/>
            <person name="Sehra H.K."/>
            <person name="Skuce C.D."/>
            <person name="Smalley S."/>
            <person name="Smith M.L."/>
            <person name="Soderlund C."/>
            <person name="Spragon L."/>
            <person name="Steward C.A."/>
            <person name="Sulston J.E."/>
            <person name="Swann R.M."/>
            <person name="Vaudin M."/>
            <person name="Wall M."/>
            <person name="Wallis J.M."/>
            <person name="Whiteley M.N."/>
            <person name="Willey D.L."/>
            <person name="Williams L."/>
            <person name="Williams S.A."/>
            <person name="Williamson H."/>
            <person name="Wilmer T.E."/>
            <person name="Wilming L."/>
            <person name="Wright C.L."/>
            <person name="Hubbard T."/>
            <person name="Bentley D.R."/>
            <person name="Beck S."/>
            <person name="Rogers J."/>
            <person name="Shimizu N."/>
            <person name="Minoshima S."/>
            <person name="Kawasaki K."/>
            <person name="Sasaki T."/>
            <person name="Asakawa S."/>
            <person name="Kudoh J."/>
            <person name="Shintani A."/>
            <person name="Shibuya K."/>
            <person name="Yoshizaki Y."/>
            <person name="Aoki N."/>
            <person name="Mitsuyama S."/>
            <person name="Roe B.A."/>
            <person name="Chen F."/>
            <person name="Chu L."/>
            <person name="Crabtree J."/>
            <person name="Deschamps S."/>
            <person name="Do A."/>
            <person name="Do T."/>
            <person name="Dorman A."/>
            <person name="Fang F."/>
            <person name="Fu Y."/>
            <person name="Hu P."/>
            <person name="Hua A."/>
            <person name="Kenton S."/>
            <person name="Lai H."/>
            <person name="Lao H.I."/>
            <person name="Lewis J."/>
            <person name="Lewis S."/>
            <person name="Lin S.-P."/>
            <person name="Loh P."/>
            <person name="Malaj E."/>
            <person name="Nguyen T."/>
            <person name="Pan H."/>
            <person name="Phan S."/>
            <person name="Qi S."/>
            <person name="Qian Y."/>
            <person name="Ray L."/>
            <person name="Ren Q."/>
            <person name="Shaull S."/>
            <person name="Sloan D."/>
            <person name="Song L."/>
            <person name="Wang Q."/>
            <person name="Wang Y."/>
            <person name="Wang Z."/>
            <person name="White J."/>
            <person name="Willingham D."/>
            <person name="Wu H."/>
            <person name="Yao Z."/>
            <person name="Zhan M."/>
            <person name="Zhang G."/>
            <person name="Chissoe S."/>
            <person name="Murray J."/>
            <person name="Miller N."/>
            <person name="Minx P."/>
            <person name="Fulton R."/>
            <person name="Johnson D."/>
            <person name="Bemis G."/>
            <person name="Bentley D."/>
            <person name="Bradshaw H."/>
            <person name="Bourne S."/>
            <person name="Cordes M."/>
            <person name="Du Z."/>
            <person name="Fulton L."/>
            <person name="Goela D."/>
            <person name="Graves T."/>
            <person name="Hawkins J."/>
            <person name="Hinds K."/>
            <person name="Kemp K."/>
            <person name="Latreille P."/>
            <person name="Layman D."/>
            <person name="Ozersky P."/>
            <person name="Rohlfing T."/>
            <person name="Scheet P."/>
            <person name="Walker C."/>
            <person name="Wamsley A."/>
            <person name="Wohldmann P."/>
            <person name="Pepin K."/>
            <person name="Nelson J."/>
            <person name="Korf I."/>
            <person name="Bedell J.A."/>
            <person name="Hillier L.W."/>
            <person name="Mardis E."/>
            <person name="Waterston R."/>
            <person name="Wilson R."/>
            <person name="Emanuel B.S."/>
            <person name="Shaikh T."/>
            <person name="Kurahashi H."/>
            <person name="Saitta S."/>
            <person name="Budarf M.L."/>
            <person name="McDermid H.E."/>
            <person name="Johnson A."/>
            <person name="Wong A.C.C."/>
            <person name="Morrow B.E."/>
            <person name="Edelmann L."/>
            <person name="Kim U.J."/>
            <person name="Shizuya H."/>
            <person name="Simon M.I."/>
            <person name="Dumanski J.P."/>
            <person name="Peyrard M."/>
            <person name="Kedra D."/>
            <person name="Seroussi E."/>
            <person name="Fransson I."/>
            <person name="Tapia I."/>
            <person name="Bruder C.E."/>
            <person name="O'Brien K.P."/>
            <person name="Wilkinson P."/>
            <person name="Bodenteich A."/>
            <person name="Hartman K."/>
            <person name="Hu X."/>
            <person name="Khan A.S."/>
            <person name="Lane L."/>
            <person name="Tilahun Y."/>
            <person name="Wright H."/>
        </authorList>
    </citation>
    <scope>NUCLEOTIDE SEQUENCE [LARGE SCALE GENOMIC DNA]</scope>
</reference>
<reference key="3">
    <citation type="journal article" date="2001" name="DNA Res.">
        <title>Identification of novel transcribed sequences on human chromosome 22 by expressed sequence tag mapping.</title>
        <authorList>
            <person name="Hirosawa M."/>
            <person name="Nagase T."/>
            <person name="Murahashi Y."/>
            <person name="Kikuno R."/>
            <person name="Ohara O."/>
        </authorList>
    </citation>
    <scope>NUCLEOTIDE SEQUENCE [LARGE SCALE MRNA] OF 33-1819 (ISOFORM 2)</scope>
    <source>
        <tissue>Brain</tissue>
    </source>
</reference>
<reference key="4">
    <citation type="journal article" date="2004" name="Genome Res.">
        <title>The status, quality, and expansion of the NIH full-length cDNA project: the Mammalian Gene Collection (MGC).</title>
        <authorList>
            <consortium name="The MGC Project Team"/>
        </authorList>
    </citation>
    <scope>NUCLEOTIDE SEQUENCE [LARGE SCALE MRNA] OF 811-1819 (ISOFORM 1)</scope>
    <scope>NUCLEOTIDE SEQUENCE [LARGE SCALE MRNA] OF 1315-1819 (ISOFORM 3)</scope>
    <scope>VARIANT LEU-1621</scope>
    <source>
        <tissue>Brain</tissue>
        <tissue>Kidney</tissue>
    </source>
</reference>
<reference key="5">
    <citation type="journal article" date="2003" name="Nature">
        <title>Proteomic characterization of the human centrosome by protein correlation profiling.</title>
        <authorList>
            <person name="Andersen J.S."/>
            <person name="Wilkinson C.J."/>
            <person name="Mayor T."/>
            <person name="Mortensen P."/>
            <person name="Nigg E.A."/>
            <person name="Mann M."/>
        </authorList>
    </citation>
    <scope>IDENTIFICATION BY MASS SPECTROMETRY</scope>
    <scope>SUBCELLULAR LOCATION [LARGE SCALE ANALYSIS]</scope>
    <source>
        <tissue>Lymphoblast</tissue>
    </source>
</reference>
<reference key="6">
    <citation type="journal article" date="2011" name="BMC Syst. Biol.">
        <title>Initial characterization of the human central proteome.</title>
        <authorList>
            <person name="Burkard T.R."/>
            <person name="Planyavsky M."/>
            <person name="Kaupe I."/>
            <person name="Breitwieser F.P."/>
            <person name="Buerckstuemmer T."/>
            <person name="Bennett K.L."/>
            <person name="Superti-Furga G."/>
            <person name="Colinge J."/>
        </authorList>
    </citation>
    <scope>IDENTIFICATION BY MASS SPECTROMETRY [LARGE SCALE ANALYSIS]</scope>
</reference>
<reference key="7">
    <citation type="journal article" date="2012" name="PLoS ONE">
        <title>Genetic mapping and exome sequencing identify variants associated with five novel diseases.</title>
        <authorList>
            <person name="Puffenberger E.G."/>
            <person name="Jinks R.N."/>
            <person name="Sougnez C."/>
            <person name="Cibulskis K."/>
            <person name="Willert R.A."/>
            <person name="Achilly N.P."/>
            <person name="Cassidy R.P."/>
            <person name="Fiorentini C.J."/>
            <person name="Heiken K.F."/>
            <person name="Lawrence J.J."/>
            <person name="Mahoney M.H."/>
            <person name="Miller C.J."/>
            <person name="Nair D.T."/>
            <person name="Politi K.A."/>
            <person name="Worcester K.N."/>
            <person name="Setton R.A."/>
            <person name="Dipiazza R."/>
            <person name="Sherman E.A."/>
            <person name="Eastman J.T."/>
            <person name="Francklyn C."/>
            <person name="Robey-Bond S."/>
            <person name="Rider N.L."/>
            <person name="Gabriel S."/>
            <person name="Morton D.H."/>
            <person name="Strauss K.A."/>
        </authorList>
    </citation>
    <scope>INVOLVEMENT IN MCCRP1</scope>
</reference>
<reference evidence="13" key="8">
    <citation type="journal article" date="2024" name="Dev. Cell">
        <title>CDK5RAP2 activates microtubule nucleator gammaTuRC by facilitating template formation and actin release.</title>
        <authorList>
            <person name="Serna M."/>
            <person name="Zimmermann F."/>
            <person name="Vineethakumari C."/>
            <person name="Gonzalez-Rodriguez N."/>
            <person name="Llorca O."/>
            <person name="Luders J."/>
        </authorList>
    </citation>
    <scope>STRUCTURE BY ELECTRON MICROSCOPY (3.57 ANGSTROMS) OF THE GAMMA-TUBULIN RING COMPLEX IN COMPLEX WITH MZT1; MZT2A; CDK5RAP2 AND ACTB</scope>
    <scope>FUNCTION</scope>
    <scope>SUBUNIT</scope>
</reference>
<reference evidence="14 15 16" key="9">
    <citation type="journal article" date="2024" name="Nat. Struct. Mol. Biol.">
        <title>Structure of the gamma-tubulin ring complex-capped microtubule.</title>
        <authorList>
            <person name="Aher A."/>
            <person name="Urnavicius L."/>
            <person name="Xue A."/>
            <person name="Neselu K."/>
            <person name="Kapoor T.M."/>
        </authorList>
    </citation>
    <scope>STRUCTURE BY ELECTRON MICROSCOPY (7.00 ANGSTROMS) OF THE GAMMA-TUBULIN RING COMPLEX IN COMPLEX WITH MZT1; ACTB; TUBA1B AND TUBB3</scope>
    <scope>FUNCTION</scope>
    <scope>SUBUNIT</scope>
</reference>
<reference evidence="12" key="10">
    <citation type="journal article" date="2024" name="Science">
        <title>Transition of human gamma-tubulin ring complex into a closed conformation during microtubule nucleation.</title>
        <authorList>
            <person name="Brito C."/>
            <person name="Serna M."/>
            <person name="Guerra P."/>
            <person name="Llorca O."/>
            <person name="Surrey T."/>
        </authorList>
    </citation>
    <scope>STRUCTURE BY ELECTRON MICROSCOPY (3.72 ANGSTROMS) OF THE GAMMA-TUBULIN RING COMPLEX</scope>
    <scope>FUNCTION</scope>
    <scope>SUBUNIT</scope>
</reference>
<feature type="chain" id="PRO_0000078131" description="Gamma-tubulin complex component 6">
    <location>
        <begin position="1"/>
        <end position="1819"/>
    </location>
</feature>
<feature type="repeat" description="1">
    <location>
        <begin position="1027"/>
        <end position="1053"/>
    </location>
</feature>
<feature type="repeat" description="2">
    <location>
        <begin position="1054"/>
        <end position="1080"/>
    </location>
</feature>
<feature type="repeat" description="3">
    <location>
        <begin position="1081"/>
        <end position="1107"/>
    </location>
</feature>
<feature type="repeat" description="4">
    <location>
        <begin position="1108"/>
        <end position="1134"/>
    </location>
</feature>
<feature type="repeat" description="5">
    <location>
        <begin position="1135"/>
        <end position="1161"/>
    </location>
</feature>
<feature type="repeat" description="6">
    <location>
        <begin position="1162"/>
        <end position="1188"/>
    </location>
</feature>
<feature type="repeat" description="7">
    <location>
        <begin position="1189"/>
        <end position="1215"/>
    </location>
</feature>
<feature type="repeat" description="8">
    <location>
        <begin position="1216"/>
        <end position="1242"/>
    </location>
</feature>
<feature type="repeat" description="9">
    <location>
        <begin position="1243"/>
        <end position="1269"/>
    </location>
</feature>
<feature type="region of interest" description="Disordered" evidence="1">
    <location>
        <begin position="810"/>
        <end position="889"/>
    </location>
</feature>
<feature type="region of interest" description="Disordered" evidence="1">
    <location>
        <begin position="929"/>
        <end position="951"/>
    </location>
</feature>
<feature type="region of interest" description="Disordered" evidence="1">
    <location>
        <begin position="1000"/>
        <end position="1023"/>
    </location>
</feature>
<feature type="region of interest" description="9 X 27 AA tandem repeats">
    <location>
        <begin position="1027"/>
        <end position="1269"/>
    </location>
</feature>
<feature type="region of interest" description="Disordered" evidence="1">
    <location>
        <begin position="1271"/>
        <end position="1412"/>
    </location>
</feature>
<feature type="compositionally biased region" description="Polar residues" evidence="1">
    <location>
        <begin position="1297"/>
        <end position="1314"/>
    </location>
</feature>
<feature type="compositionally biased region" description="Low complexity" evidence="1">
    <location>
        <begin position="1321"/>
        <end position="1335"/>
    </location>
</feature>
<feature type="compositionally biased region" description="Polar residues" evidence="1">
    <location>
        <begin position="1384"/>
        <end position="1398"/>
    </location>
</feature>
<feature type="splice variant" id="VSP_017208" description="In isoform 3." evidence="10">
    <location>
        <begin position="1652"/>
        <end position="1662"/>
    </location>
</feature>
<feature type="splice variant" id="VSP_001624" description="In isoform 2." evidence="9">
    <location>
        <begin position="1724"/>
        <end position="1757"/>
    </location>
</feature>
<feature type="splice variant" id="VSP_017209" description="In isoform 3." evidence="10">
    <location>
        <begin position="1724"/>
        <end position="1729"/>
    </location>
</feature>
<feature type="sequence variant" id="VAR_055852" description="In dbSNP:rs8137873.">
    <original>L</original>
    <variation>P</variation>
    <location>
        <position position="104"/>
    </location>
</feature>
<feature type="sequence variant" id="VAR_031594" description="In dbSNP:rs4838865." evidence="2">
    <original>L</original>
    <variation>S</variation>
    <location>
        <position position="567"/>
    </location>
</feature>
<feature type="sequence variant" id="VAR_055853" description="In dbSNP:rs35573482.">
    <original>I</original>
    <variation>M</variation>
    <location>
        <position position="624"/>
    </location>
</feature>
<feature type="sequence variant" id="VAR_055854" description="In dbSNP:rs34455105.">
    <original>A</original>
    <variation>V</variation>
    <location>
        <position position="884"/>
    </location>
</feature>
<feature type="sequence variant" id="VAR_055855" description="In dbSNP:rs17248287.">
    <original>V</original>
    <variation>M</variation>
    <location>
        <position position="1232"/>
    </location>
</feature>
<feature type="sequence variant" id="VAR_055856" description="In dbSNP:rs5771107.">
    <original>S</original>
    <variation>C</variation>
    <location>
        <position position="1364"/>
    </location>
</feature>
<feature type="sequence variant" id="VAR_055857" description="In dbSNP:rs11703226." evidence="2">
    <original>T</original>
    <variation>A</variation>
    <location>
        <position position="1377"/>
    </location>
</feature>
<feature type="sequence variant" id="VAR_055858" description="In dbSNP:rs4838864." evidence="4">
    <original>V</original>
    <variation>L</variation>
    <location>
        <position position="1621"/>
    </location>
</feature>
<feature type="helix" evidence="17">
    <location>
        <begin position="4"/>
        <end position="14"/>
    </location>
</feature>
<feature type="helix" evidence="17">
    <location>
        <begin position="29"/>
        <end position="48"/>
    </location>
</feature>
<feature type="helix" evidence="17">
    <location>
        <begin position="67"/>
        <end position="79"/>
    </location>
</feature>
<feature type="helix" evidence="17">
    <location>
        <begin position="83"/>
        <end position="97"/>
    </location>
</feature>
<feature type="helix" evidence="17">
    <location>
        <begin position="108"/>
        <end position="116"/>
    </location>
</feature>
<evidence type="ECO:0000256" key="1">
    <source>
        <dbReference type="SAM" id="MobiDB-lite"/>
    </source>
</evidence>
<evidence type="ECO:0000269" key="2">
    <source>
    </source>
</evidence>
<evidence type="ECO:0000269" key="3">
    <source>
    </source>
</evidence>
<evidence type="ECO:0000269" key="4">
    <source>
    </source>
</evidence>
<evidence type="ECO:0000269" key="5">
    <source>
    </source>
</evidence>
<evidence type="ECO:0000269" key="6">
    <source>
    </source>
</evidence>
<evidence type="ECO:0000269" key="7">
    <source>
    </source>
</evidence>
<evidence type="ECO:0000269" key="8">
    <source>
    </source>
</evidence>
<evidence type="ECO:0000303" key="9">
    <source>
    </source>
</evidence>
<evidence type="ECO:0000303" key="10">
    <source>
    </source>
</evidence>
<evidence type="ECO:0000305" key="11"/>
<evidence type="ECO:0007744" key="12">
    <source>
        <dbReference type="PDB" id="8Q62"/>
    </source>
</evidence>
<evidence type="ECO:0007744" key="13">
    <source>
        <dbReference type="PDB" id="8RX1"/>
    </source>
</evidence>
<evidence type="ECO:0007744" key="14">
    <source>
        <dbReference type="PDB" id="8VRD"/>
    </source>
</evidence>
<evidence type="ECO:0007744" key="15">
    <source>
        <dbReference type="PDB" id="8VRJ"/>
    </source>
</evidence>
<evidence type="ECO:0007744" key="16">
    <source>
        <dbReference type="PDB" id="8VRK"/>
    </source>
</evidence>
<evidence type="ECO:0007829" key="17">
    <source>
        <dbReference type="PDB" id="6M33"/>
    </source>
</evidence>
<proteinExistence type="evidence at protein level"/>
<comment type="function">
    <text evidence="2 6 7 8">Component of the gamma-tubulin ring complex (gTuRC) which mediates microtubule nucleation (PubMed:11694571, PubMed:38305685, PubMed:38609661, PubMed:39321809). The gTuRC regulates the minus-end nucleation of alpha-beta tubulin heterodimers that grow into microtubule protafilaments, a critical step in centrosome duplication and spindle formation (PubMed:38305685, PubMed:38609661, PubMed:39321809).</text>
</comment>
<comment type="subunit">
    <text evidence="2 6 7 8">Component of the gamma-tubulin ring complex (gTuRC) consisting of TUBGCP2, TUBGCP3, TUBGCP4, TUBGCP5 and TUBGCP6 and gamma-tubulin TUBG1 or TUBG2 (PubMed:39321809, PubMed:38609661, PubMed:38305685). TUBGCP2, TUBGCP3, TUBGCP4, TUBGCP5 and TUBGCP6 assemble in a 5:5:2:1:1 stoichiometry; each is associated with a gamma-tubulin, thereby arranging 14 gamma-tubulins in a helical manner (PubMed:39321809, PubMed:38609661, PubMed:38305685). Gamma-tubulin at the first position is blocked by TUBGCP3 at the last position, allowing 13 protafilaments to grow into a microtubule (PubMed:39321809, PubMed:38609661, PubMed:38305685). The gTuRC (via TUBGCP3 and TUBGCP6) interacts with ACTB and MZT1; the interactions form a luminal bridge that stabilizes the initial structure during complex assembly (PubMed:39321809, PubMed:38609661). The gTuRC (via TUBGCP2) interacts with MZT2A/MZT2B and CDK5RAP2 (via CM1 motif); the interactions play a role in gTuRC activation (PubMed:39321809).</text>
</comment>
<comment type="subcellular location">
    <subcellularLocation>
        <location evidence="2 3">Cytoplasm</location>
        <location evidence="2 3">Cytoskeleton</location>
        <location evidence="2 3">Microtubule organizing center</location>
        <location evidence="2 3">Centrosome</location>
    </subcellularLocation>
</comment>
<comment type="alternative products">
    <event type="alternative splicing"/>
    <isoform>
        <id>Q96RT7-1</id>
        <name>1</name>
        <sequence type="displayed"/>
    </isoform>
    <isoform>
        <id>Q96RT7-2</id>
        <name>2</name>
        <sequence type="described" ref="VSP_001624"/>
    </isoform>
    <isoform>
        <id>Q96RT7-3</id>
        <name>3</name>
        <sequence type="described" ref="VSP_017208 VSP_017209"/>
    </isoform>
</comment>
<comment type="disease" evidence="5">
    <disease id="DI-03393">
        <name>Microcephaly and chorioretinopathy, autosomal recessive, 1</name>
        <acronym>MCCRP1</acronym>
        <description>A syndrome characterized by microcephaly, cognitive impairment, underdeveloped retina and choroid, and epilepsy in some patients. The more anterior parts of the retina, near the periphery and pars plana, have a grayish hue and diminutive vasculature similar to retinopathy of prematurity. Visual impairment becomes evident during the first year of life.</description>
        <dbReference type="MIM" id="251270"/>
    </disease>
    <text>The disease is caused by variants affecting the gene represented in this entry.</text>
</comment>
<comment type="similarity">
    <text evidence="11">Belongs to the TUBGCP family.</text>
</comment>
<comment type="sequence caution" evidence="11">
    <conflict type="frameshift">
        <sequence resource="EMBL-CDS" id="AAH42165"/>
    </conflict>
</comment>
<comment type="sequence caution" evidence="11">
    <conflict type="miscellaneous discrepancy">
        <sequence resource="EMBL-CDS" id="BAB33339"/>
    </conflict>
    <text>Intron retention.</text>
</comment>
<dbReference type="EMBL" id="AF272887">
    <property type="protein sequence ID" value="AAK82968.1"/>
    <property type="molecule type" value="mRNA"/>
</dbReference>
<dbReference type="EMBL" id="AL022328">
    <property type="status" value="NOT_ANNOTATED_CDS"/>
    <property type="molecule type" value="Genomic_DNA"/>
</dbReference>
<dbReference type="EMBL" id="AB051456">
    <property type="protein sequence ID" value="BAB33339.1"/>
    <property type="status" value="ALT_SEQ"/>
    <property type="molecule type" value="mRNA"/>
</dbReference>
<dbReference type="EMBL" id="BC023573">
    <property type="protein sequence ID" value="AAH23573.1"/>
    <property type="molecule type" value="mRNA"/>
</dbReference>
<dbReference type="EMBL" id="BC042165">
    <property type="protein sequence ID" value="AAH42165.1"/>
    <property type="status" value="ALT_FRAME"/>
    <property type="molecule type" value="mRNA"/>
</dbReference>
<dbReference type="CCDS" id="CCDS14087.1">
    <molecule id="Q96RT7-1"/>
</dbReference>
<dbReference type="RefSeq" id="NP_065194.3">
    <molecule id="Q96RT7-1"/>
    <property type="nucleotide sequence ID" value="NM_020461.4"/>
</dbReference>
<dbReference type="PDB" id="6M33">
    <property type="method" value="X-ray"/>
    <property type="resolution" value="3.29 A"/>
    <property type="chains" value="A=1-119"/>
</dbReference>
<dbReference type="PDB" id="6V6C">
    <property type="method" value="EM"/>
    <property type="resolution" value="4.50 A"/>
    <property type="chains" value="L=1-1819"/>
</dbReference>
<dbReference type="PDB" id="6V6S">
    <property type="method" value="EM"/>
    <property type="resolution" value="4.30 A"/>
    <property type="chains" value="L=1-1819"/>
</dbReference>
<dbReference type="PDB" id="6X0U">
    <property type="method" value="EM"/>
    <property type="resolution" value="3.60 A"/>
    <property type="chains" value="D=1-1819"/>
</dbReference>
<dbReference type="PDB" id="7AS4">
    <property type="method" value="EM"/>
    <property type="resolution" value="4.13 A"/>
    <property type="chains" value="4/L=1-1819"/>
</dbReference>
<dbReference type="PDB" id="7QJ0">
    <property type="method" value="EM"/>
    <property type="resolution" value="5.32 A"/>
    <property type="chains" value="L=1-1819"/>
</dbReference>
<dbReference type="PDB" id="7QJ1">
    <property type="method" value="EM"/>
    <property type="resolution" value="7.00 A"/>
    <property type="chains" value="L=1-1819"/>
</dbReference>
<dbReference type="PDB" id="7QJ2">
    <property type="method" value="EM"/>
    <property type="resolution" value="8.60 A"/>
    <property type="chains" value="L=1-1819"/>
</dbReference>
<dbReference type="PDB" id="7QJ3">
    <property type="method" value="EM"/>
    <property type="resolution" value="7.60 A"/>
    <property type="chains" value="L=1-1819"/>
</dbReference>
<dbReference type="PDB" id="7QJ4">
    <property type="method" value="EM"/>
    <property type="resolution" value="9.00 A"/>
    <property type="chains" value="L=1-1819"/>
</dbReference>
<dbReference type="PDB" id="7QJ5">
    <property type="method" value="EM"/>
    <property type="resolution" value="8.70 A"/>
    <property type="chains" value="L/c=1-1819"/>
</dbReference>
<dbReference type="PDB" id="7QJ6">
    <property type="method" value="EM"/>
    <property type="resolution" value="7.80 A"/>
    <property type="chains" value="L/c=1-1819"/>
</dbReference>
<dbReference type="PDB" id="7QJ7">
    <property type="method" value="EM"/>
    <property type="resolution" value="8.70 A"/>
    <property type="chains" value="L/c=1-1819"/>
</dbReference>
<dbReference type="PDB" id="7QJ8">
    <property type="method" value="EM"/>
    <property type="resolution" value="8.70 A"/>
    <property type="chains" value="L/c=1-1819"/>
</dbReference>
<dbReference type="PDB" id="7QJ9">
    <property type="method" value="EM"/>
    <property type="resolution" value="8.10 A"/>
    <property type="chains" value="L/c=1-1819"/>
</dbReference>
<dbReference type="PDB" id="7QJA">
    <property type="method" value="EM"/>
    <property type="resolution" value="9.20 A"/>
    <property type="chains" value="L/c=1-1819"/>
</dbReference>
<dbReference type="PDB" id="7QJB">
    <property type="method" value="EM"/>
    <property type="resolution" value="9.20 A"/>
    <property type="chains" value="L/c=1-1819"/>
</dbReference>
<dbReference type="PDB" id="7QJC">
    <property type="method" value="EM"/>
    <property type="resolution" value="16.10 A"/>
    <property type="chains" value="L/c=1-1819"/>
</dbReference>
<dbReference type="PDB" id="7QJD">
    <property type="method" value="EM"/>
    <property type="resolution" value="7.10 A"/>
    <property type="chains" value="L/c=1-1819"/>
</dbReference>
<dbReference type="PDB" id="7QJE">
    <property type="method" value="EM"/>
    <property type="resolution" value="7.80 A"/>
    <property type="chains" value="L=1-1819"/>
</dbReference>
<dbReference type="PDB" id="8Q62">
    <property type="method" value="EM"/>
    <property type="resolution" value="3.72 A"/>
    <property type="chains" value="L=1-1819"/>
</dbReference>
<dbReference type="PDB" id="8RX1">
    <property type="method" value="EM"/>
    <property type="resolution" value="3.57 A"/>
    <property type="chains" value="L/d=1-1819"/>
</dbReference>
<dbReference type="PDB" id="8VRD">
    <property type="method" value="EM"/>
    <property type="resolution" value="7.00 A"/>
    <property type="chains" value="L/P/T=1-1819"/>
</dbReference>
<dbReference type="PDB" id="8VRJ">
    <property type="method" value="EM"/>
    <property type="resolution" value="7.70 A"/>
    <property type="chains" value="3/6/L=1-1819"/>
</dbReference>
<dbReference type="PDB" id="8VRK">
    <property type="method" value="EM"/>
    <property type="resolution" value="8.50 A"/>
    <property type="chains" value="3/6/L=1-1819"/>
</dbReference>
<dbReference type="PDB" id="9H9P">
    <property type="method" value="EM"/>
    <property type="resolution" value="4.50 A"/>
    <property type="chains" value="L=1-1819"/>
</dbReference>
<dbReference type="PDBsum" id="6M33"/>
<dbReference type="PDBsum" id="6V6C"/>
<dbReference type="PDBsum" id="6V6S"/>
<dbReference type="PDBsum" id="6X0U"/>
<dbReference type="PDBsum" id="7AS4"/>
<dbReference type="PDBsum" id="7QJ0"/>
<dbReference type="PDBsum" id="7QJ1"/>
<dbReference type="PDBsum" id="7QJ2"/>
<dbReference type="PDBsum" id="7QJ3"/>
<dbReference type="PDBsum" id="7QJ4"/>
<dbReference type="PDBsum" id="7QJ5"/>
<dbReference type="PDBsum" id="7QJ6"/>
<dbReference type="PDBsum" id="7QJ7"/>
<dbReference type="PDBsum" id="7QJ8"/>
<dbReference type="PDBsum" id="7QJ9"/>
<dbReference type="PDBsum" id="7QJA"/>
<dbReference type="PDBsum" id="7QJB"/>
<dbReference type="PDBsum" id="7QJC"/>
<dbReference type="PDBsum" id="7QJD"/>
<dbReference type="PDBsum" id="7QJE"/>
<dbReference type="PDBsum" id="8Q62"/>
<dbReference type="PDBsum" id="8RX1"/>
<dbReference type="PDBsum" id="8VRD"/>
<dbReference type="PDBsum" id="8VRJ"/>
<dbReference type="PDBsum" id="8VRK"/>
<dbReference type="PDBsum" id="9H9P"/>
<dbReference type="EMDB" id="EMD-11888"/>
<dbReference type="EMDB" id="EMD-14005"/>
<dbReference type="EMDB" id="EMD-14006"/>
<dbReference type="EMDB" id="EMD-14007"/>
<dbReference type="EMDB" id="EMD-14008"/>
<dbReference type="EMDB" id="EMD-14009"/>
<dbReference type="EMDB" id="EMD-14010"/>
<dbReference type="EMDB" id="EMD-14011"/>
<dbReference type="EMDB" id="EMD-14012"/>
<dbReference type="EMDB" id="EMD-14013"/>
<dbReference type="EMDB" id="EMD-14014"/>
<dbReference type="EMDB" id="EMD-14015"/>
<dbReference type="EMDB" id="EMD-14016"/>
<dbReference type="EMDB" id="EMD-14017"/>
<dbReference type="EMDB" id="EMD-14018"/>
<dbReference type="EMDB" id="EMD-14019"/>
<dbReference type="EMDB" id="EMD-18181"/>
<dbReference type="EMDB" id="EMD-18182"/>
<dbReference type="EMDB" id="EMD-19570"/>
<dbReference type="EMDB" id="EMD-21068"/>
<dbReference type="EMDB" id="EMD-21073"/>
<dbReference type="EMDB" id="EMD-21984"/>
<dbReference type="SMR" id="Q96RT7"/>
<dbReference type="BioGRID" id="124505">
    <property type="interactions" value="84"/>
</dbReference>
<dbReference type="CORUM" id="Q96RT7"/>
<dbReference type="FunCoup" id="Q96RT7">
    <property type="interactions" value="2165"/>
</dbReference>
<dbReference type="IntAct" id="Q96RT7">
    <property type="interactions" value="58"/>
</dbReference>
<dbReference type="MINT" id="Q96RT7"/>
<dbReference type="STRING" id="9606.ENSP00000248846"/>
<dbReference type="GlyGen" id="Q96RT7">
    <property type="glycosylation" value="4 sites, 1 N-linked glycan (1 site)"/>
</dbReference>
<dbReference type="iPTMnet" id="Q96RT7"/>
<dbReference type="PhosphoSitePlus" id="Q96RT7"/>
<dbReference type="BioMuta" id="TUBGCP6"/>
<dbReference type="DMDM" id="143811395"/>
<dbReference type="jPOST" id="Q96RT7"/>
<dbReference type="MassIVE" id="Q96RT7"/>
<dbReference type="PaxDb" id="9606-ENSP00000248846"/>
<dbReference type="PeptideAtlas" id="Q96RT7"/>
<dbReference type="ProteomicsDB" id="78029">
    <molecule id="Q96RT7-1"/>
</dbReference>
<dbReference type="ProteomicsDB" id="78030">
    <molecule id="Q96RT7-2"/>
</dbReference>
<dbReference type="ProteomicsDB" id="78031">
    <molecule id="Q96RT7-3"/>
</dbReference>
<dbReference type="Pumba" id="Q96RT7"/>
<dbReference type="Antibodypedia" id="52528">
    <property type="antibodies" value="118 antibodies from 24 providers"/>
</dbReference>
<dbReference type="Ensembl" id="ENST00000248846.10">
    <molecule id="Q96RT7-1"/>
    <property type="protein sequence ID" value="ENSP00000248846.5"/>
    <property type="gene ID" value="ENSG00000128159.12"/>
</dbReference>
<dbReference type="GeneID" id="85378"/>
<dbReference type="KEGG" id="hsa:85378"/>
<dbReference type="MANE-Select" id="ENST00000248846.10">
    <property type="protein sequence ID" value="ENSP00000248846.5"/>
    <property type="RefSeq nucleotide sequence ID" value="NM_020461.4"/>
    <property type="RefSeq protein sequence ID" value="NP_065194.3"/>
</dbReference>
<dbReference type="UCSC" id="uc003bkb.2">
    <molecule id="Q96RT7-1"/>
    <property type="organism name" value="human"/>
</dbReference>
<dbReference type="AGR" id="HGNC:18127"/>
<dbReference type="CTD" id="85378"/>
<dbReference type="DisGeNET" id="85378"/>
<dbReference type="GeneCards" id="TUBGCP6"/>
<dbReference type="HGNC" id="HGNC:18127">
    <property type="gene designation" value="TUBGCP6"/>
</dbReference>
<dbReference type="HPA" id="ENSG00000128159">
    <property type="expression patterns" value="Low tissue specificity"/>
</dbReference>
<dbReference type="MalaCards" id="TUBGCP6"/>
<dbReference type="MIM" id="251270">
    <property type="type" value="phenotype"/>
</dbReference>
<dbReference type="MIM" id="610053">
    <property type="type" value="gene"/>
</dbReference>
<dbReference type="neXtProt" id="NX_Q96RT7"/>
<dbReference type="OpenTargets" id="ENSG00000128159"/>
<dbReference type="Orphanet" id="2518">
    <property type="disease" value="Autosomal recessive chorioretinopathy-microcephaly syndrome"/>
</dbReference>
<dbReference type="PharmGKB" id="PA38507"/>
<dbReference type="VEuPathDB" id="HostDB:ENSG00000128159"/>
<dbReference type="eggNOG" id="KOG2000">
    <property type="taxonomic scope" value="Eukaryota"/>
</dbReference>
<dbReference type="GeneTree" id="ENSGT00940000157810"/>
<dbReference type="HOGENOM" id="CLU_002518_0_0_1"/>
<dbReference type="InParanoid" id="Q96RT7"/>
<dbReference type="OMA" id="MAPVNAH"/>
<dbReference type="OrthoDB" id="775571at2759"/>
<dbReference type="PAN-GO" id="Q96RT7">
    <property type="GO annotations" value="10 GO annotations based on evolutionary models"/>
</dbReference>
<dbReference type="PhylomeDB" id="Q96RT7"/>
<dbReference type="TreeFam" id="TF106321"/>
<dbReference type="PathwayCommons" id="Q96RT7"/>
<dbReference type="Reactome" id="R-HSA-380270">
    <property type="pathway name" value="Recruitment of mitotic centrosome proteins and complexes"/>
</dbReference>
<dbReference type="Reactome" id="R-HSA-380320">
    <property type="pathway name" value="Recruitment of NuMA to mitotic centrosomes"/>
</dbReference>
<dbReference type="SignaLink" id="Q96RT7"/>
<dbReference type="SIGNOR" id="Q96RT7"/>
<dbReference type="BioGRID-ORCS" id="85378">
    <property type="hits" value="696 hits in 1159 CRISPR screens"/>
</dbReference>
<dbReference type="CD-CODE" id="8C2F96ED">
    <property type="entry name" value="Centrosome"/>
</dbReference>
<dbReference type="ChiTaRS" id="TUBGCP6">
    <property type="organism name" value="human"/>
</dbReference>
<dbReference type="GeneWiki" id="TUBGCP6"/>
<dbReference type="GenomeRNAi" id="85378"/>
<dbReference type="Pharos" id="Q96RT7">
    <property type="development level" value="Tbio"/>
</dbReference>
<dbReference type="PRO" id="PR:Q96RT7"/>
<dbReference type="Proteomes" id="UP000005640">
    <property type="component" value="Chromosome 22"/>
</dbReference>
<dbReference type="RNAct" id="Q96RT7">
    <property type="molecule type" value="protein"/>
</dbReference>
<dbReference type="Bgee" id="ENSG00000128159">
    <property type="expression patterns" value="Expressed in right hemisphere of cerebellum and 113 other cell types or tissues"/>
</dbReference>
<dbReference type="ExpressionAtlas" id="Q96RT7">
    <property type="expression patterns" value="baseline and differential"/>
</dbReference>
<dbReference type="GO" id="GO:0005813">
    <property type="term" value="C:centrosome"/>
    <property type="evidence" value="ECO:0000314"/>
    <property type="project" value="UniProtKB"/>
</dbReference>
<dbReference type="GO" id="GO:0005829">
    <property type="term" value="C:cytosol"/>
    <property type="evidence" value="ECO:0000304"/>
    <property type="project" value="Reactome"/>
</dbReference>
<dbReference type="GO" id="GO:0000930">
    <property type="term" value="C:gamma-tubulin complex"/>
    <property type="evidence" value="ECO:0000318"/>
    <property type="project" value="GO_Central"/>
</dbReference>
<dbReference type="GO" id="GO:0000931">
    <property type="term" value="C:gamma-tubulin ring complex"/>
    <property type="evidence" value="ECO:0000314"/>
    <property type="project" value="UniProtKB"/>
</dbReference>
<dbReference type="GO" id="GO:0016020">
    <property type="term" value="C:membrane"/>
    <property type="evidence" value="ECO:0007005"/>
    <property type="project" value="UniProtKB"/>
</dbReference>
<dbReference type="GO" id="GO:0005874">
    <property type="term" value="C:microtubule"/>
    <property type="evidence" value="ECO:0007669"/>
    <property type="project" value="UniProtKB-KW"/>
</dbReference>
<dbReference type="GO" id="GO:0000922">
    <property type="term" value="C:spindle pole"/>
    <property type="evidence" value="ECO:0007669"/>
    <property type="project" value="InterPro"/>
</dbReference>
<dbReference type="GO" id="GO:0043015">
    <property type="term" value="F:gamma-tubulin binding"/>
    <property type="evidence" value="ECO:0000318"/>
    <property type="project" value="GO_Central"/>
</dbReference>
<dbReference type="GO" id="GO:0008017">
    <property type="term" value="F:microtubule binding"/>
    <property type="evidence" value="ECO:0000314"/>
    <property type="project" value="UniProtKB"/>
</dbReference>
<dbReference type="GO" id="GO:0031122">
    <property type="term" value="P:cytoplasmic microtubule organization"/>
    <property type="evidence" value="ECO:0000318"/>
    <property type="project" value="GO_Central"/>
</dbReference>
<dbReference type="GO" id="GO:0051321">
    <property type="term" value="P:meiotic cell cycle"/>
    <property type="evidence" value="ECO:0000318"/>
    <property type="project" value="GO_Central"/>
</dbReference>
<dbReference type="GO" id="GO:0007020">
    <property type="term" value="P:microtubule nucleation"/>
    <property type="evidence" value="ECO:0000314"/>
    <property type="project" value="UniProtKB"/>
</dbReference>
<dbReference type="GO" id="GO:0000278">
    <property type="term" value="P:mitotic cell cycle"/>
    <property type="evidence" value="ECO:0000318"/>
    <property type="project" value="GO_Central"/>
</dbReference>
<dbReference type="GO" id="GO:0051225">
    <property type="term" value="P:spindle assembly"/>
    <property type="evidence" value="ECO:0000318"/>
    <property type="project" value="GO_Central"/>
</dbReference>
<dbReference type="FunFam" id="1.20.120.1900:FF:000004">
    <property type="entry name" value="gamma-tubulin complex component 6 isoform X1"/>
    <property type="match status" value="1"/>
</dbReference>
<dbReference type="Gene3D" id="1.20.120.1900">
    <property type="entry name" value="Gamma-tubulin complex, C-terminal domain"/>
    <property type="match status" value="1"/>
</dbReference>
<dbReference type="InterPro" id="IPR007259">
    <property type="entry name" value="GCP"/>
</dbReference>
<dbReference type="InterPro" id="IPR045818">
    <property type="entry name" value="GCP6_N"/>
</dbReference>
<dbReference type="InterPro" id="IPR040457">
    <property type="entry name" value="GCP_C"/>
</dbReference>
<dbReference type="InterPro" id="IPR042241">
    <property type="entry name" value="GCP_C_sf"/>
</dbReference>
<dbReference type="InterPro" id="IPR041470">
    <property type="entry name" value="GCP_N"/>
</dbReference>
<dbReference type="PANTHER" id="PTHR19302">
    <property type="entry name" value="GAMMA TUBULIN COMPLEX PROTEIN"/>
    <property type="match status" value="1"/>
</dbReference>
<dbReference type="PANTHER" id="PTHR19302:SF70">
    <property type="entry name" value="GAMMA-TUBULIN COMPLEX COMPONENT 6"/>
    <property type="match status" value="1"/>
</dbReference>
<dbReference type="Pfam" id="PF19340">
    <property type="entry name" value="GCP6_N"/>
    <property type="match status" value="1"/>
</dbReference>
<dbReference type="Pfam" id="PF04130">
    <property type="entry name" value="GCP_C_terminal"/>
    <property type="match status" value="1"/>
</dbReference>
<dbReference type="Pfam" id="PF17681">
    <property type="entry name" value="GCP_N_terminal"/>
    <property type="match status" value="1"/>
</dbReference>
<keyword id="KW-0002">3D-structure</keyword>
<keyword id="KW-0025">Alternative splicing</keyword>
<keyword id="KW-0963">Cytoplasm</keyword>
<keyword id="KW-0206">Cytoskeleton</keyword>
<keyword id="KW-0493">Microtubule</keyword>
<keyword id="KW-1267">Proteomics identification</keyword>
<keyword id="KW-1185">Reference proteome</keyword>
<keyword id="KW-0677">Repeat</keyword>
<accession>Q96RT7</accession>
<accession>Q5JZ80</accession>
<accession>Q6PJ40</accession>
<accession>Q86YE9</accession>
<accession>Q9BY91</accession>
<accession>Q9UGX3</accession>
<accession>Q9UGX4</accession>
<name>GCP6_HUMAN</name>
<sequence length="1819" mass="200498">MASITQLFDDLCEALLPAAKTHLGQRSVNRKRAKRSLKKVAYNALFTNLFQDETQQLQPDMSKLPARNKILMLSFDLRVGGLGPKADRLEELVEELEAAPCCPLLEVGSVLDLLVQLAGSGPPQVLPRKRDYFLNNKHVGRNVPYSGYDCDDLSVFEMDVQSLISREECLCHSMIQETLQVMEAAPGTGLPTVGLFSFGDPCGDRFERDTRVSLFGALVHSRTYDMDVRLGLPPVPDNADLSGLAIKVPPSVDQWEDEGFQSASNLTPDSQSEPSVTPDVDLWEAALTYEASKRRCWERVGCPPGHREEPYLTEAGRDAFDKFCRLHQGELQLLAGGVLQAPQPVLVKECELVKDVLNVLIGVVSATFSLCQPAQAFVVKRGVHVSGASPESISSLLSEVAEYGTCYTRLSHFSLQPVLDSLYSKGLVFQAFTSGLRRYLQYYRACVLSTPPTLSLLTIGFLFKKLGRQLRYLAELCGVGAVLPGTCGGGPRAAFPTGVKLLSYLYQEALHNCSNEHYPVLLSLLKTSCEPYTRFIHDWVYSGVFRDAYGEFMIQVNHEYLSFRDKLYWTHGYVLISKEVEDCVPVFLKHIAHDIYVCGKTINLLKLCCPRHYLCWSDVPVPRISVIFSLEELKEIEKDCAVYVGRMERVARHSSVSKEEKELRMEIAKQELIAHAREAASRVLSALSDRQMSERMALDARKREQFQRLKEQFVKDQERRQAARQEELDDDFSYARELRDRERRLKSLEEELERKARQALVDHYSKLSAEAARREQKALWRIQRHRLESARLRFLLEDEKHIQEMLKAVSEAHQPQEPPDVLLSVHPQVTSPGPEHPEGGQGCDSGSAEQHSPAWDGWNRPGLLTPQPLKPLAVGAGGRGLQQAEGARPFSDSLSIGDFLPVGPGAEPSVQTGMVPLLEVALQTINLDLPPSAPGEAPAAASTQPSRPQEYDFSTVLRPAVATSPAPGPLQAAECSLGSSGLQLWEDSCGKMDACGSASRETLLPSHPPRRAALEEGSSQPTERLFGQVSGGGLPTGDYASEIAPTRPRWNTHGHVSDASIRVGENVSDVAPTQPRWNTHGHVSNASISLGESVSDVAPTRPRWNIHGHVSNASIRVGENVSDVAPTRPRWNTHGHVSNASIRVGENVSDVAPTRPRWNTHGHVSDASISLGESVSDMAPARPRWNTHGHVSDASISLGESVSDMAPTRPRWNTHGHVSDTSIRVGENVSDVAPIRSRCNTHGHVSDASISLGEPVSDVVSTRPRWNTHVPIPPPHMVLGALSPEAEPNTPRPQQSPPGHTSQSALSLGAQSTVLDCGPRLPVEVGPSLSSPSSGCGEGSISVGENVSDVAPTQPWWPNTPGDSVSEELGPGRSGDTEDLSPNWPLNSQEDTAAQSSPGRGEEAEASAAEAQGGEQAYLAGLAGQYHLERYPDSYESMSEPPIAHLLRPVLPRAFAFPVDPQVQSAADETAVQLSELLTLPVLMKRSITAPLAAHISLVNKAAVDYFFVELHLEAHYEALRHFLLMEDGEFAQSLSDLLFEKLGAGQTPGELLNPLVLNSVLSKALQCSLHGDTPHASNLSLALKYLPEVFAPNAPDVLSCLELRYKVDWPLNIVITEGCVSKYSGVFSFLLQLKLMMWALKDVCFHLKRTALLSHMAGSVQFRQLQLFKHEMQHFVKVIQGYIANQILHVTWCEFRARLATVGDLEEIQRAHAEYLHKAVFRGLLTEKAAPVMNVIHSIFSLVLKFRSQLISQAWGPPGGPRGAEHPNFALMQQSYNTFKYYSHFLFKVVTKLVNRGYQPHLEDFLLRINFNNYYQDA</sequence>
<protein>
    <recommendedName>
        <fullName>Gamma-tubulin complex component 6</fullName>
        <shortName>GCP-6</shortName>
    </recommendedName>
</protein>